<dbReference type="EMBL" id="Z12161">
    <property type="protein sequence ID" value="CAA78151.1"/>
    <property type="molecule type" value="Genomic_DNA"/>
</dbReference>
<dbReference type="EMBL" id="U47060">
    <property type="protein sequence ID" value="AAA87050.1"/>
    <property type="molecule type" value="mRNA"/>
</dbReference>
<dbReference type="EMBL" id="DP000236">
    <property type="protein sequence ID" value="AAR16266.1"/>
    <property type="molecule type" value="Genomic_DNA"/>
</dbReference>
<dbReference type="PIR" id="A43419">
    <property type="entry name" value="A43419"/>
</dbReference>
<dbReference type="RefSeq" id="NP_001003296.1">
    <molecule id="P33724-1"/>
    <property type="nucleotide sequence ID" value="NM_001003296.1"/>
</dbReference>
<dbReference type="RefSeq" id="XP_005628404.1">
    <property type="nucleotide sequence ID" value="XM_005628347.2"/>
</dbReference>
<dbReference type="RefSeq" id="XP_013974350.1">
    <property type="nucleotide sequence ID" value="XM_014118875.1"/>
</dbReference>
<dbReference type="RefSeq" id="XP_038541864.1">
    <molecule id="P33724-2"/>
    <property type="nucleotide sequence ID" value="XM_038685936.1"/>
</dbReference>
<dbReference type="RefSeq" id="XP_038541865.1">
    <molecule id="P33724-2"/>
    <property type="nucleotide sequence ID" value="XM_038685937.1"/>
</dbReference>
<dbReference type="SMR" id="P33724"/>
<dbReference type="BioGRID" id="139896">
    <property type="interactions" value="4"/>
</dbReference>
<dbReference type="FunCoup" id="P33724">
    <property type="interactions" value="370"/>
</dbReference>
<dbReference type="IntAct" id="P33724">
    <property type="interactions" value="6"/>
</dbReference>
<dbReference type="MINT" id="P33724"/>
<dbReference type="STRING" id="9615.ENSCAFP00000005060"/>
<dbReference type="iPTMnet" id="P33724"/>
<dbReference type="SwissPalm" id="P33724"/>
<dbReference type="PaxDb" id="9612-ENSCAFP00000005060"/>
<dbReference type="Ensembl" id="ENSCAFT00000098661.1">
    <molecule id="P33724-1"/>
    <property type="protein sequence ID" value="ENSCAFP00000074453.1"/>
    <property type="gene ID" value="ENSCAFG00000055058.1"/>
</dbReference>
<dbReference type="Ensembl" id="ENSCAFT00030014054.1">
    <molecule id="P33724-1"/>
    <property type="protein sequence ID" value="ENSCAFP00030012265.1"/>
    <property type="gene ID" value="ENSCAFG00030007606.1"/>
</dbReference>
<dbReference type="Ensembl" id="ENSCAFT00040030547.1">
    <molecule id="P33724-1"/>
    <property type="protein sequence ID" value="ENSCAFP00040026553.1"/>
    <property type="gene ID" value="ENSCAFG00040016536.1"/>
</dbReference>
<dbReference type="Ensembl" id="ENSCAFT00845012174.1">
    <molecule id="P33724-1"/>
    <property type="protein sequence ID" value="ENSCAFP00845009515.1"/>
    <property type="gene ID" value="ENSCAFG00845006847.1"/>
</dbReference>
<dbReference type="GeneID" id="403980"/>
<dbReference type="KEGG" id="cfa:403980"/>
<dbReference type="CTD" id="857"/>
<dbReference type="VEuPathDB" id="HostDB:ENSCAFG00845006847"/>
<dbReference type="eggNOG" id="ENOG502QUK5">
    <property type="taxonomic scope" value="Eukaryota"/>
</dbReference>
<dbReference type="GeneTree" id="ENSGT00950000183006"/>
<dbReference type="HOGENOM" id="CLU_102582_0_0_1"/>
<dbReference type="InParanoid" id="P33724"/>
<dbReference type="OMA" id="MSGSKYV"/>
<dbReference type="OrthoDB" id="5917823at2759"/>
<dbReference type="TreeFam" id="TF315736"/>
<dbReference type="Reactome" id="R-CFA-203641">
    <property type="pathway name" value="NOSTRIN mediated eNOS trafficking"/>
</dbReference>
<dbReference type="Reactome" id="R-CFA-210991">
    <property type="pathway name" value="Basigin interactions"/>
</dbReference>
<dbReference type="Reactome" id="R-CFA-4641262">
    <property type="pathway name" value="Disassembly of the destruction complex and recruitment of AXIN to the membrane"/>
</dbReference>
<dbReference type="Reactome" id="R-CFA-8980692">
    <property type="pathway name" value="RHOA GTPase cycle"/>
</dbReference>
<dbReference type="Reactome" id="R-CFA-9009391">
    <property type="pathway name" value="Extra-nuclear estrogen signaling"/>
</dbReference>
<dbReference type="Reactome" id="R-CFA-9013026">
    <property type="pathway name" value="RHOB GTPase cycle"/>
</dbReference>
<dbReference type="Reactome" id="R-CFA-9013106">
    <property type="pathway name" value="RHOC GTPase cycle"/>
</dbReference>
<dbReference type="Reactome" id="R-CFA-9013148">
    <property type="pathway name" value="CDC42 GTPase cycle"/>
</dbReference>
<dbReference type="Reactome" id="R-CFA-9013149">
    <property type="pathway name" value="RAC1 GTPase cycle"/>
</dbReference>
<dbReference type="Reactome" id="R-CFA-9013404">
    <property type="pathway name" value="RAC2 GTPase cycle"/>
</dbReference>
<dbReference type="Reactome" id="R-CFA-9013405">
    <property type="pathway name" value="RHOD GTPase cycle"/>
</dbReference>
<dbReference type="Reactome" id="R-CFA-9013406">
    <property type="pathway name" value="RHOQ GTPase cycle"/>
</dbReference>
<dbReference type="Reactome" id="R-CFA-9013407">
    <property type="pathway name" value="RHOH GTPase cycle"/>
</dbReference>
<dbReference type="Reactome" id="R-CFA-9013408">
    <property type="pathway name" value="RHOG GTPase cycle"/>
</dbReference>
<dbReference type="Reactome" id="R-CFA-9013423">
    <property type="pathway name" value="RAC3 GTPase cycle"/>
</dbReference>
<dbReference type="Reactome" id="R-CFA-9035034">
    <property type="pathway name" value="RHOF GTPase cycle"/>
</dbReference>
<dbReference type="Reactome" id="R-CFA-9696264">
    <property type="pathway name" value="RND3 GTPase cycle"/>
</dbReference>
<dbReference type="Reactome" id="R-CFA-9696270">
    <property type="pathway name" value="RND2 GTPase cycle"/>
</dbReference>
<dbReference type="Reactome" id="R-CFA-9696273">
    <property type="pathway name" value="RND1 GTPase cycle"/>
</dbReference>
<dbReference type="Proteomes" id="UP000002254">
    <property type="component" value="Chromosome 14"/>
</dbReference>
<dbReference type="Proteomes" id="UP000694429">
    <property type="component" value="Chromosome 14"/>
</dbReference>
<dbReference type="Proteomes" id="UP000694542">
    <property type="component" value="Chromosome 14"/>
</dbReference>
<dbReference type="Proteomes" id="UP000805418">
    <property type="component" value="Chromosome 14"/>
</dbReference>
<dbReference type="Bgee" id="ENSCAFG00000003404">
    <property type="expression patterns" value="Expressed in adipose tissue and 46 other cell types or tissues"/>
</dbReference>
<dbReference type="GO" id="GO:0002080">
    <property type="term" value="C:acrosomal membrane"/>
    <property type="evidence" value="ECO:0007669"/>
    <property type="project" value="Ensembl"/>
</dbReference>
<dbReference type="GO" id="GO:0005901">
    <property type="term" value="C:caveola"/>
    <property type="evidence" value="ECO:0000314"/>
    <property type="project" value="UniProtKB"/>
</dbReference>
<dbReference type="GO" id="GO:0002095">
    <property type="term" value="C:caveolar macromolecular signaling complex"/>
    <property type="evidence" value="ECO:0007669"/>
    <property type="project" value="Ensembl"/>
</dbReference>
<dbReference type="GO" id="GO:0005938">
    <property type="term" value="C:cell cortex"/>
    <property type="evidence" value="ECO:0007669"/>
    <property type="project" value="Ensembl"/>
</dbReference>
<dbReference type="GO" id="GO:0005929">
    <property type="term" value="C:cilium"/>
    <property type="evidence" value="ECO:0007669"/>
    <property type="project" value="Ensembl"/>
</dbReference>
<dbReference type="GO" id="GO:0031410">
    <property type="term" value="C:cytoplasmic vesicle"/>
    <property type="evidence" value="ECO:0000318"/>
    <property type="project" value="GO_Central"/>
</dbReference>
<dbReference type="GO" id="GO:0005783">
    <property type="term" value="C:endoplasmic reticulum"/>
    <property type="evidence" value="ECO:0007669"/>
    <property type="project" value="Ensembl"/>
</dbReference>
<dbReference type="GO" id="GO:0005768">
    <property type="term" value="C:endosome"/>
    <property type="evidence" value="ECO:0000250"/>
    <property type="project" value="UniProtKB"/>
</dbReference>
<dbReference type="GO" id="GO:0070382">
    <property type="term" value="C:exocytic vesicle"/>
    <property type="evidence" value="ECO:0000314"/>
    <property type="project" value="CAFA"/>
</dbReference>
<dbReference type="GO" id="GO:0005925">
    <property type="term" value="C:focal adhesion"/>
    <property type="evidence" value="ECO:0007669"/>
    <property type="project" value="Ensembl"/>
</dbReference>
<dbReference type="GO" id="GO:0005794">
    <property type="term" value="C:Golgi apparatus"/>
    <property type="evidence" value="ECO:0000318"/>
    <property type="project" value="GO_Central"/>
</dbReference>
<dbReference type="GO" id="GO:0000139">
    <property type="term" value="C:Golgi membrane"/>
    <property type="evidence" value="ECO:0007669"/>
    <property type="project" value="UniProtKB-SubCell"/>
</dbReference>
<dbReference type="GO" id="GO:0048471">
    <property type="term" value="C:perinuclear region of cytoplasm"/>
    <property type="evidence" value="ECO:0000318"/>
    <property type="project" value="GO_Central"/>
</dbReference>
<dbReference type="GO" id="GO:0051117">
    <property type="term" value="F:ATPase binding"/>
    <property type="evidence" value="ECO:0007669"/>
    <property type="project" value="Ensembl"/>
</dbReference>
<dbReference type="GO" id="GO:0042802">
    <property type="term" value="F:identical protein binding"/>
    <property type="evidence" value="ECO:0007669"/>
    <property type="project" value="Ensembl"/>
</dbReference>
<dbReference type="GO" id="GO:0070320">
    <property type="term" value="F:inward rectifier potassium channel inhibitor activity"/>
    <property type="evidence" value="ECO:0007669"/>
    <property type="project" value="Ensembl"/>
</dbReference>
<dbReference type="GO" id="GO:0060090">
    <property type="term" value="F:molecular adaptor activity"/>
    <property type="evidence" value="ECO:0000318"/>
    <property type="project" value="GO_Central"/>
</dbReference>
<dbReference type="GO" id="GO:0050998">
    <property type="term" value="F:nitric-oxide synthase binding"/>
    <property type="evidence" value="ECO:0007669"/>
    <property type="project" value="Ensembl"/>
</dbReference>
<dbReference type="GO" id="GO:0008142">
    <property type="term" value="F:oxysterol binding"/>
    <property type="evidence" value="ECO:0000250"/>
    <property type="project" value="UniProtKB"/>
</dbReference>
<dbReference type="GO" id="GO:0016504">
    <property type="term" value="F:peptidase activator activity"/>
    <property type="evidence" value="ECO:0007669"/>
    <property type="project" value="Ensembl"/>
</dbReference>
<dbReference type="GO" id="GO:0046982">
    <property type="term" value="F:protein heterodimerization activity"/>
    <property type="evidence" value="ECO:0007669"/>
    <property type="project" value="Ensembl"/>
</dbReference>
<dbReference type="GO" id="GO:0019901">
    <property type="term" value="F:protein kinase binding"/>
    <property type="evidence" value="ECO:0000318"/>
    <property type="project" value="GO_Central"/>
</dbReference>
<dbReference type="GO" id="GO:0030292">
    <property type="term" value="F:protein tyrosine kinase inhibitor activity"/>
    <property type="evidence" value="ECO:0007669"/>
    <property type="project" value="Ensembl"/>
</dbReference>
<dbReference type="GO" id="GO:0044877">
    <property type="term" value="F:protein-containing complex binding"/>
    <property type="evidence" value="ECO:0007669"/>
    <property type="project" value="Ensembl"/>
</dbReference>
<dbReference type="GO" id="GO:0030674">
    <property type="term" value="F:protein-macromolecule adaptor activity"/>
    <property type="evidence" value="ECO:0007669"/>
    <property type="project" value="Ensembl"/>
</dbReference>
<dbReference type="GO" id="GO:0005102">
    <property type="term" value="F:signaling receptor binding"/>
    <property type="evidence" value="ECO:0007669"/>
    <property type="project" value="Ensembl"/>
</dbReference>
<dbReference type="GO" id="GO:0031267">
    <property type="term" value="F:small GTPase binding"/>
    <property type="evidence" value="ECO:0007669"/>
    <property type="project" value="Ensembl"/>
</dbReference>
<dbReference type="GO" id="GO:0044325">
    <property type="term" value="F:transmembrane transporter binding"/>
    <property type="evidence" value="ECO:0000318"/>
    <property type="project" value="GO_Central"/>
</dbReference>
<dbReference type="GO" id="GO:0001525">
    <property type="term" value="P:angiogenesis"/>
    <property type="evidence" value="ECO:0007669"/>
    <property type="project" value="Ensembl"/>
</dbReference>
<dbReference type="GO" id="GO:0038166">
    <property type="term" value="P:angiotensin-activated signaling pathway"/>
    <property type="evidence" value="ECO:0007669"/>
    <property type="project" value="Ensembl"/>
</dbReference>
<dbReference type="GO" id="GO:0097190">
    <property type="term" value="P:apoptotic signaling pathway"/>
    <property type="evidence" value="ECO:0007669"/>
    <property type="project" value="Ensembl"/>
</dbReference>
<dbReference type="GO" id="GO:0071711">
    <property type="term" value="P:basement membrane organization"/>
    <property type="evidence" value="ECO:0007669"/>
    <property type="project" value="Ensembl"/>
</dbReference>
<dbReference type="GO" id="GO:0006816">
    <property type="term" value="P:calcium ion transport"/>
    <property type="evidence" value="ECO:0007669"/>
    <property type="project" value="Ensembl"/>
</dbReference>
<dbReference type="GO" id="GO:0060070">
    <property type="term" value="P:canonical Wnt signaling pathway"/>
    <property type="evidence" value="ECO:0007669"/>
    <property type="project" value="Ensembl"/>
</dbReference>
<dbReference type="GO" id="GO:0070836">
    <property type="term" value="P:caveola assembly"/>
    <property type="evidence" value="ECO:0000314"/>
    <property type="project" value="BHF-UCL"/>
</dbReference>
<dbReference type="GO" id="GO:0072584">
    <property type="term" value="P:caveolin-mediated endocytosis"/>
    <property type="evidence" value="ECO:0007669"/>
    <property type="project" value="Ensembl"/>
</dbReference>
<dbReference type="GO" id="GO:0030154">
    <property type="term" value="P:cell differentiation"/>
    <property type="evidence" value="ECO:0000318"/>
    <property type="project" value="GO_Central"/>
</dbReference>
<dbReference type="GO" id="GO:0071360">
    <property type="term" value="P:cellular response to exogenous dsRNA"/>
    <property type="evidence" value="ECO:0007669"/>
    <property type="project" value="Ensembl"/>
</dbReference>
<dbReference type="GO" id="GO:0071455">
    <property type="term" value="P:cellular response to hyperoxia"/>
    <property type="evidence" value="ECO:0007669"/>
    <property type="project" value="Ensembl"/>
</dbReference>
<dbReference type="GO" id="GO:0071218">
    <property type="term" value="P:cellular response to misfolded protein"/>
    <property type="evidence" value="ECO:0007669"/>
    <property type="project" value="Ensembl"/>
</dbReference>
<dbReference type="GO" id="GO:0071560">
    <property type="term" value="P:cellular response to transforming growth factor beta stimulus"/>
    <property type="evidence" value="ECO:0007669"/>
    <property type="project" value="Ensembl"/>
</dbReference>
<dbReference type="GO" id="GO:0042632">
    <property type="term" value="P:cholesterol homeostasis"/>
    <property type="evidence" value="ECO:0007669"/>
    <property type="project" value="Ensembl"/>
</dbReference>
<dbReference type="GO" id="GO:0019221">
    <property type="term" value="P:cytokine-mediated signaling pathway"/>
    <property type="evidence" value="ECO:0007669"/>
    <property type="project" value="Ensembl"/>
</dbReference>
<dbReference type="GO" id="GO:0001935">
    <property type="term" value="P:endothelial cell proliferation"/>
    <property type="evidence" value="ECO:0007669"/>
    <property type="project" value="Ensembl"/>
</dbReference>
<dbReference type="GO" id="GO:0051649">
    <property type="term" value="P:establishment of localization in cell"/>
    <property type="evidence" value="ECO:0007669"/>
    <property type="project" value="Ensembl"/>
</dbReference>
<dbReference type="GO" id="GO:0048144">
    <property type="term" value="P:fibroblast proliferation"/>
    <property type="evidence" value="ECO:0007669"/>
    <property type="project" value="Ensembl"/>
</dbReference>
<dbReference type="GO" id="GO:0002067">
    <property type="term" value="P:glandular epithelial cell differentiation"/>
    <property type="evidence" value="ECO:0007669"/>
    <property type="project" value="Ensembl"/>
</dbReference>
<dbReference type="GO" id="GO:0038016">
    <property type="term" value="P:insulin receptor internalization"/>
    <property type="evidence" value="ECO:0007669"/>
    <property type="project" value="Ensembl"/>
</dbReference>
<dbReference type="GO" id="GO:0033484">
    <property type="term" value="P:intracellular nitric oxide homeostasis"/>
    <property type="evidence" value="ECO:0007669"/>
    <property type="project" value="Ensembl"/>
</dbReference>
<dbReference type="GO" id="GO:0007595">
    <property type="term" value="P:lactation"/>
    <property type="evidence" value="ECO:0007669"/>
    <property type="project" value="Ensembl"/>
</dbReference>
<dbReference type="GO" id="GO:0019915">
    <property type="term" value="P:lipid storage"/>
    <property type="evidence" value="ECO:0007669"/>
    <property type="project" value="Ensembl"/>
</dbReference>
<dbReference type="GO" id="GO:0060056">
    <property type="term" value="P:mammary gland involution"/>
    <property type="evidence" value="ECO:0007669"/>
    <property type="project" value="Ensembl"/>
</dbReference>
<dbReference type="GO" id="GO:0000165">
    <property type="term" value="P:MAPK cascade"/>
    <property type="evidence" value="ECO:0007669"/>
    <property type="project" value="Ensembl"/>
</dbReference>
<dbReference type="GO" id="GO:0051899">
    <property type="term" value="P:membrane depolarization"/>
    <property type="evidence" value="ECO:0007669"/>
    <property type="project" value="Ensembl"/>
</dbReference>
<dbReference type="GO" id="GO:0046716">
    <property type="term" value="P:muscle cell cellular homeostasis"/>
    <property type="evidence" value="ECO:0007669"/>
    <property type="project" value="Ensembl"/>
</dbReference>
<dbReference type="GO" id="GO:2000811">
    <property type="term" value="P:negative regulation of anoikis"/>
    <property type="evidence" value="ECO:0007669"/>
    <property type="project" value="Ensembl"/>
</dbReference>
<dbReference type="GO" id="GO:0090090">
    <property type="term" value="P:negative regulation of canonical Wnt signaling pathway"/>
    <property type="evidence" value="ECO:0007669"/>
    <property type="project" value="Ensembl"/>
</dbReference>
<dbReference type="GO" id="GO:0001960">
    <property type="term" value="P:negative regulation of cytokine-mediated signaling pathway"/>
    <property type="evidence" value="ECO:0007669"/>
    <property type="project" value="Ensembl"/>
</dbReference>
<dbReference type="GO" id="GO:0001937">
    <property type="term" value="P:negative regulation of endothelial cell proliferation"/>
    <property type="evidence" value="ECO:0000318"/>
    <property type="project" value="GO_Central"/>
</dbReference>
<dbReference type="GO" id="GO:0030857">
    <property type="term" value="P:negative regulation of epithelial cell differentiation"/>
    <property type="evidence" value="ECO:0007669"/>
    <property type="project" value="Ensembl"/>
</dbReference>
<dbReference type="GO" id="GO:0048147">
    <property type="term" value="P:negative regulation of fibroblast proliferation"/>
    <property type="evidence" value="ECO:0007669"/>
    <property type="project" value="Ensembl"/>
</dbReference>
<dbReference type="GO" id="GO:0043409">
    <property type="term" value="P:negative regulation of MAPK cascade"/>
    <property type="evidence" value="ECO:0007669"/>
    <property type="project" value="Ensembl"/>
</dbReference>
<dbReference type="GO" id="GO:0060546">
    <property type="term" value="P:negative regulation of necroptotic process"/>
    <property type="evidence" value="ECO:0007669"/>
    <property type="project" value="Ensembl"/>
</dbReference>
<dbReference type="GO" id="GO:0045019">
    <property type="term" value="P:negative regulation of nitric oxide biosynthetic process"/>
    <property type="evidence" value="ECO:0007669"/>
    <property type="project" value="Ensembl"/>
</dbReference>
<dbReference type="GO" id="GO:0048550">
    <property type="term" value="P:negative regulation of pinocytosis"/>
    <property type="evidence" value="ECO:0007669"/>
    <property type="project" value="Ensembl"/>
</dbReference>
<dbReference type="GO" id="GO:1901380">
    <property type="term" value="P:negative regulation of potassium ion transmembrane transport"/>
    <property type="evidence" value="ECO:0007669"/>
    <property type="project" value="Ensembl"/>
</dbReference>
<dbReference type="GO" id="GO:0031397">
    <property type="term" value="P:negative regulation of protein ubiquitination"/>
    <property type="evidence" value="ECO:0007669"/>
    <property type="project" value="Ensembl"/>
</dbReference>
<dbReference type="GO" id="GO:0046426">
    <property type="term" value="P:negative regulation of receptor signaling pathway via JAK-STAT"/>
    <property type="evidence" value="ECO:0007669"/>
    <property type="project" value="Ensembl"/>
</dbReference>
<dbReference type="GO" id="GO:0000122">
    <property type="term" value="P:negative regulation of transcription by RNA polymerase II"/>
    <property type="evidence" value="ECO:0007669"/>
    <property type="project" value="Ensembl"/>
</dbReference>
<dbReference type="GO" id="GO:0006809">
    <property type="term" value="P:nitric oxide biosynthetic process"/>
    <property type="evidence" value="ECO:0007669"/>
    <property type="project" value="Ensembl"/>
</dbReference>
<dbReference type="GO" id="GO:0010524">
    <property type="term" value="P:positive regulation of calcium ion transport into cytosol"/>
    <property type="evidence" value="ECO:0007669"/>
    <property type="project" value="Ensembl"/>
</dbReference>
<dbReference type="GO" id="GO:0043123">
    <property type="term" value="P:positive regulation of canonical NF-kappaB signal transduction"/>
    <property type="evidence" value="ECO:0007669"/>
    <property type="project" value="Ensembl"/>
</dbReference>
<dbReference type="GO" id="GO:0060355">
    <property type="term" value="P:positive regulation of cell adhesion molecule production"/>
    <property type="evidence" value="ECO:0007669"/>
    <property type="project" value="Ensembl"/>
</dbReference>
<dbReference type="GO" id="GO:0030335">
    <property type="term" value="P:positive regulation of cell migration"/>
    <property type="evidence" value="ECO:0007669"/>
    <property type="project" value="Ensembl"/>
</dbReference>
<dbReference type="GO" id="GO:0010875">
    <property type="term" value="P:positive regulation of cholesterol efflux"/>
    <property type="evidence" value="ECO:0007669"/>
    <property type="project" value="Ensembl"/>
</dbReference>
<dbReference type="GO" id="GO:0120162">
    <property type="term" value="P:positive regulation of cold-induced thermogenesis"/>
    <property type="evidence" value="ECO:0007669"/>
    <property type="project" value="Ensembl"/>
</dbReference>
<dbReference type="GO" id="GO:1904294">
    <property type="term" value="P:positive regulation of ERAD pathway"/>
    <property type="evidence" value="ECO:0007669"/>
    <property type="project" value="Ensembl"/>
</dbReference>
<dbReference type="GO" id="GO:2001238">
    <property type="term" value="P:positive regulation of extrinsic apoptotic signaling pathway"/>
    <property type="evidence" value="ECO:0007669"/>
    <property type="project" value="Ensembl"/>
</dbReference>
<dbReference type="GO" id="GO:1903598">
    <property type="term" value="P:positive regulation of gap junction assembly"/>
    <property type="evidence" value="ECO:0007669"/>
    <property type="project" value="Ensembl"/>
</dbReference>
<dbReference type="GO" id="GO:0010628">
    <property type="term" value="P:positive regulation of gene expression"/>
    <property type="evidence" value="ECO:0007669"/>
    <property type="project" value="Ensembl"/>
</dbReference>
<dbReference type="GO" id="GO:2001244">
    <property type="term" value="P:positive regulation of intrinsic apoptotic signaling pathway"/>
    <property type="evidence" value="ECO:0007669"/>
    <property type="project" value="Ensembl"/>
</dbReference>
<dbReference type="GO" id="GO:0031398">
    <property type="term" value="P:positive regulation of protein ubiquitination"/>
    <property type="evidence" value="ECO:0007669"/>
    <property type="project" value="Ensembl"/>
</dbReference>
<dbReference type="GO" id="GO:0034141">
    <property type="term" value="P:positive regulation of toll-like receptor 3 signaling pathway"/>
    <property type="evidence" value="ECO:0007669"/>
    <property type="project" value="Ensembl"/>
</dbReference>
<dbReference type="GO" id="GO:0045907">
    <property type="term" value="P:positive regulation of vasoconstriction"/>
    <property type="evidence" value="ECO:0007669"/>
    <property type="project" value="Ensembl"/>
</dbReference>
<dbReference type="GO" id="GO:0010608">
    <property type="term" value="P:post-transcriptional regulation of gene expression"/>
    <property type="evidence" value="ECO:0007669"/>
    <property type="project" value="Ensembl"/>
</dbReference>
<dbReference type="GO" id="GO:1903361">
    <property type="term" value="P:protein localization to basolateral plasma membrane"/>
    <property type="evidence" value="ECO:0000314"/>
    <property type="project" value="BHF-UCL"/>
</dbReference>
<dbReference type="GO" id="GO:0044860">
    <property type="term" value="P:protein localization to plasma membrane raft"/>
    <property type="evidence" value="ECO:0000314"/>
    <property type="project" value="BHF-UCL"/>
</dbReference>
<dbReference type="GO" id="GO:0015031">
    <property type="term" value="P:protein transport"/>
    <property type="evidence" value="ECO:0007669"/>
    <property type="project" value="Ensembl"/>
</dbReference>
<dbReference type="GO" id="GO:0031623">
    <property type="term" value="P:receptor internalization"/>
    <property type="evidence" value="ECO:0000250"/>
    <property type="project" value="UniProtKB"/>
</dbReference>
<dbReference type="GO" id="GO:0019065">
    <property type="term" value="P:receptor-mediated endocytosis of virus by host cell"/>
    <property type="evidence" value="ECO:0007669"/>
    <property type="project" value="Ensembl"/>
</dbReference>
<dbReference type="GO" id="GO:0030193">
    <property type="term" value="P:regulation of blood coagulation"/>
    <property type="evidence" value="ECO:0007669"/>
    <property type="project" value="Ensembl"/>
</dbReference>
<dbReference type="GO" id="GO:1901844">
    <property type="term" value="P:regulation of cell communication by electrical coupling involved in cardiac conduction"/>
    <property type="evidence" value="ECO:0007669"/>
    <property type="project" value="Ensembl"/>
</dbReference>
<dbReference type="GO" id="GO:0051480">
    <property type="term" value="P:regulation of cytosolic calcium ion concentration"/>
    <property type="evidence" value="ECO:0000318"/>
    <property type="project" value="GO_Central"/>
</dbReference>
<dbReference type="GO" id="GO:2000535">
    <property type="term" value="P:regulation of entry of bacterium into host cell"/>
    <property type="evidence" value="ECO:0007669"/>
    <property type="project" value="Ensembl"/>
</dbReference>
<dbReference type="GO" id="GO:0019217">
    <property type="term" value="P:regulation of fatty acid metabolic process"/>
    <property type="evidence" value="ECO:0007669"/>
    <property type="project" value="Ensembl"/>
</dbReference>
<dbReference type="GO" id="GO:0086091">
    <property type="term" value="P:regulation of heart rate by cardiac conduction"/>
    <property type="evidence" value="ECO:0007669"/>
    <property type="project" value="Ensembl"/>
</dbReference>
<dbReference type="GO" id="GO:0098903">
    <property type="term" value="P:regulation of membrane repolarization during action potential"/>
    <property type="evidence" value="ECO:0007669"/>
    <property type="project" value="Ensembl"/>
</dbReference>
<dbReference type="GO" id="GO:1900027">
    <property type="term" value="P:regulation of ruffle assembly"/>
    <property type="evidence" value="ECO:0007669"/>
    <property type="project" value="Ensembl"/>
</dbReference>
<dbReference type="GO" id="GO:0006940">
    <property type="term" value="P:regulation of smooth muscle contraction"/>
    <property type="evidence" value="ECO:0007669"/>
    <property type="project" value="Ensembl"/>
</dbReference>
<dbReference type="GO" id="GO:0003057">
    <property type="term" value="P:regulation of the force of heart contraction by chemical signal"/>
    <property type="evidence" value="ECO:0007669"/>
    <property type="project" value="Ensembl"/>
</dbReference>
<dbReference type="GO" id="GO:0098911">
    <property type="term" value="P:regulation of ventricular cardiac muscle cell action potential"/>
    <property type="evidence" value="ECO:0007669"/>
    <property type="project" value="Ensembl"/>
</dbReference>
<dbReference type="GO" id="GO:0009617">
    <property type="term" value="P:response to bacterium"/>
    <property type="evidence" value="ECO:0007669"/>
    <property type="project" value="Ensembl"/>
</dbReference>
<dbReference type="GO" id="GO:0051592">
    <property type="term" value="P:response to calcium ion"/>
    <property type="evidence" value="ECO:0007669"/>
    <property type="project" value="Ensembl"/>
</dbReference>
<dbReference type="GO" id="GO:0043627">
    <property type="term" value="P:response to estrogen"/>
    <property type="evidence" value="ECO:0007669"/>
    <property type="project" value="Ensembl"/>
</dbReference>
<dbReference type="GO" id="GO:0001666">
    <property type="term" value="P:response to hypoxia"/>
    <property type="evidence" value="ECO:0007669"/>
    <property type="project" value="Ensembl"/>
</dbReference>
<dbReference type="GO" id="GO:0002931">
    <property type="term" value="P:response to ischemia"/>
    <property type="evidence" value="ECO:0007669"/>
    <property type="project" value="Ensembl"/>
</dbReference>
<dbReference type="GO" id="GO:0032570">
    <property type="term" value="P:response to progesterone"/>
    <property type="evidence" value="ECO:0007669"/>
    <property type="project" value="Ensembl"/>
</dbReference>
<dbReference type="GO" id="GO:0007519">
    <property type="term" value="P:skeletal muscle tissue development"/>
    <property type="evidence" value="ECO:0007669"/>
    <property type="project" value="Ensembl"/>
</dbReference>
<dbReference type="GO" id="GO:0031295">
    <property type="term" value="P:T cell costimulation"/>
    <property type="evidence" value="ECO:0000250"/>
    <property type="project" value="UniProtKB"/>
</dbReference>
<dbReference type="GO" id="GO:0006641">
    <property type="term" value="P:triglyceride metabolic process"/>
    <property type="evidence" value="ECO:0007669"/>
    <property type="project" value="Ensembl"/>
</dbReference>
<dbReference type="GO" id="GO:0001570">
    <property type="term" value="P:vasculogenesis"/>
    <property type="evidence" value="ECO:0007669"/>
    <property type="project" value="Ensembl"/>
</dbReference>
<dbReference type="GO" id="GO:0042310">
    <property type="term" value="P:vasoconstriction"/>
    <property type="evidence" value="ECO:0007669"/>
    <property type="project" value="Ensembl"/>
</dbReference>
<dbReference type="GO" id="GO:0016050">
    <property type="term" value="P:vesicle organization"/>
    <property type="evidence" value="ECO:0000314"/>
    <property type="project" value="BHF-UCL"/>
</dbReference>
<dbReference type="InterPro" id="IPR001612">
    <property type="entry name" value="Caveolin"/>
</dbReference>
<dbReference type="InterPro" id="IPR018361">
    <property type="entry name" value="Caveolin_CS"/>
</dbReference>
<dbReference type="PANTHER" id="PTHR10844">
    <property type="entry name" value="CAVEOLIN"/>
    <property type="match status" value="1"/>
</dbReference>
<dbReference type="PANTHER" id="PTHR10844:SF18">
    <property type="entry name" value="CAVEOLIN-1"/>
    <property type="match status" value="1"/>
</dbReference>
<dbReference type="Pfam" id="PF01146">
    <property type="entry name" value="Caveolin"/>
    <property type="match status" value="1"/>
</dbReference>
<dbReference type="PROSITE" id="PS01210">
    <property type="entry name" value="CAVEOLIN"/>
    <property type="match status" value="1"/>
</dbReference>
<feature type="initiator methionine" description="Removed" evidence="4">
    <location>
        <position position="1"/>
    </location>
</feature>
<feature type="chain" id="PRO_0000004762" description="Caveolin-1">
    <location>
        <begin position="2"/>
        <end position="178"/>
    </location>
</feature>
<feature type="topological domain" description="Cytoplasmic" evidence="6">
    <location>
        <begin position="2"/>
        <end position="104"/>
    </location>
</feature>
<feature type="intramembrane region" description="Helical" evidence="6">
    <location>
        <begin position="105"/>
        <end position="125"/>
    </location>
</feature>
<feature type="topological domain" description="Cytoplasmic" evidence="6">
    <location>
        <begin position="126"/>
        <end position="178"/>
    </location>
</feature>
<feature type="region of interest" description="Required for homooligomerization" evidence="4">
    <location>
        <begin position="2"/>
        <end position="94"/>
    </location>
</feature>
<feature type="region of interest" description="Interaction with CAVIN3" evidence="4">
    <location>
        <begin position="82"/>
        <end position="94"/>
    </location>
</feature>
<feature type="region of interest" description="Interacts with SPRY1, SPRY2, SPRY3 and SPRY4" evidence="3">
    <location>
        <begin position="131"/>
        <end position="142"/>
    </location>
</feature>
<feature type="region of interest" description="Interacts with SPRY1, SPRY2, and SPRY4" evidence="3">
    <location>
        <begin position="149"/>
        <end position="160"/>
    </location>
</feature>
<feature type="region of interest" description="Interacts with SPRY1, SPRY2, SPRY3 and SPRY4" evidence="3">
    <location>
        <begin position="167"/>
        <end position="178"/>
    </location>
</feature>
<feature type="modified residue" description="N-acetylserine" evidence="4">
    <location>
        <position position="2"/>
    </location>
</feature>
<feature type="modified residue" description="Phosphoserine" evidence="2">
    <location>
        <position position="2"/>
    </location>
</feature>
<feature type="modified residue" description="N6-acetyllysine; alternate" evidence="4">
    <location>
        <position position="5"/>
    </location>
</feature>
<feature type="modified residue" description="Phosphotyrosine" evidence="4">
    <location>
        <position position="6"/>
    </location>
</feature>
<feature type="modified residue" description="Phosphoserine" evidence="3">
    <location>
        <position position="9"/>
    </location>
</feature>
<feature type="modified residue" description="Phosphotyrosine; by ABL1" evidence="3">
    <location>
        <position position="14"/>
    </location>
</feature>
<feature type="modified residue" description="Phosphotyrosine" evidence="4">
    <location>
        <position position="25"/>
    </location>
</feature>
<feature type="modified residue" description="Phosphoserine" evidence="4">
    <location>
        <position position="37"/>
    </location>
</feature>
<feature type="lipid moiety-binding region" description="S-palmitoyl cysteine" evidence="9">
    <location>
        <position position="133"/>
    </location>
</feature>
<feature type="lipid moiety-binding region" description="S-palmitoyl cysteine" evidence="9">
    <location>
        <position position="143"/>
    </location>
</feature>
<feature type="lipid moiety-binding region" description="S-palmitoyl cysteine" evidence="9">
    <location>
        <position position="156"/>
    </location>
</feature>
<feature type="cross-link" description="Glycyl lysine isopeptide (Lys-Gly) (interchain with G-Cter in ubiquitin); alternate" evidence="4">
    <location>
        <position position="5"/>
    </location>
</feature>
<feature type="cross-link" description="Glycyl lysine isopeptide (Lys-Gly) (interchain with G-Cter in ubiquitin)" evidence="4">
    <location>
        <position position="26"/>
    </location>
</feature>
<feature type="cross-link" description="Glycyl lysine isopeptide (Lys-Gly) (interchain with G-Cter in ubiquitin)" evidence="4">
    <location>
        <position position="30"/>
    </location>
</feature>
<feature type="cross-link" description="Glycyl lysine isopeptide (Lys-Gly) (interchain with G-Cter in ubiquitin)" evidence="4">
    <location>
        <position position="39"/>
    </location>
</feature>
<feature type="cross-link" description="Glycyl lysine isopeptide (Lys-Gly) (interchain with G-Cter in ubiquitin)" evidence="4">
    <location>
        <position position="47"/>
    </location>
</feature>
<feature type="cross-link" description="Glycyl lysine isopeptide (Lys-Gly) (interchain with G-Cter in ubiquitin)" evidence="4">
    <location>
        <position position="57"/>
    </location>
</feature>
<feature type="splice variant" id="VSP_018691" description="In isoform Beta." evidence="11">
    <location>
        <begin position="1"/>
        <end position="31"/>
    </location>
</feature>
<proteinExistence type="evidence at protein level"/>
<gene>
    <name type="primary">CAV1</name>
    <name type="synonym">CAV</name>
</gene>
<keyword id="KW-0007">Acetylation</keyword>
<keyword id="KW-0024">Alternative initiation</keyword>
<keyword id="KW-1003">Cell membrane</keyword>
<keyword id="KW-0903">Direct protein sequencing</keyword>
<keyword id="KW-0333">Golgi apparatus</keyword>
<keyword id="KW-1017">Isopeptide bond</keyword>
<keyword id="KW-0449">Lipoprotein</keyword>
<keyword id="KW-0472">Membrane</keyword>
<keyword id="KW-0564">Palmitate</keyword>
<keyword id="KW-0597">Phosphoprotein</keyword>
<keyword id="KW-1185">Reference proteome</keyword>
<keyword id="KW-0832">Ubl conjugation</keyword>
<accession>P33724</accession>
<accession>A0M8U8</accession>
<protein>
    <recommendedName>
        <fullName>Caveolin-1</fullName>
    </recommendedName>
    <alternativeName>
        <fullName>Vesicular integral-membrane protein VIP21</fullName>
    </alternativeName>
</protein>
<sequence length="178" mass="20606">MSGGKYVDSEGHLYTVPIREQGNIYKPNNKAMAEEMSEKQVYDAHTKEIDLVNRDPKHLNDDVVKIDFEDVIAEPEGTHSFDGIWKASFTTFTVTKYWFYRLLSALFGIPMALIWGIYFAILSFLHIWAVVPCIKSFLIEIQCISRVYSIYVHTFCDPFFEAVGKIFSNIRINMQKET</sequence>
<comment type="function">
    <text evidence="3 4">May act as a scaffolding protein within caveolar membranes. Forms a stable heterooligomeric complex with CAV2 that targets to lipid rafts and drives caveolae formation. Mediates the recruitment of CAVIN proteins (CAVIN1/2/3/4) to the caveolae (By similarity). Interacts directly with G-protein alpha subunits and can functionally regulate their activity (By similarity). Involved in the costimulatory signal essential for T-cell receptor (TCR)-mediated T-cell activation. Its binding to DPP4 induces T-cell proliferation and NF-kappa-B activation in a T-cell receptor/CD3-dependent manner (By similarity). Recruits CTNNB1 to caveolar membranes and may regulate CTNNB1-mediated signaling through the Wnt pathway (By similarity). Negatively regulates TGFB1-mediated activation of SMAD2/3 by mediating the internalization of TGFBR1 from membrane rafts leading to its subsequent degradation (By similarity). Binds 20(S)-hydroxycholesterol (20(S)-OHC) (By similarity).</text>
</comment>
<comment type="subunit">
    <text evidence="2 3 4 5 7 8">Homooligomer (PubMed:7568142). Interacts with BMX, BTK, GLIPR2, NOSTRIN, SNAP25 and STX1A. Interacts with PACSIN2; this interaction induces membrane tubulation (By similarity). Interacts (via the N-terminus) with DPP4; the interaction is direct. Interacts with SLC7A9 (By similarity). Interacts with CTNNB1, CDH1 and JUP (PubMed:10816572). Interacts with TGFBR1. Interacts with CAVIN3 (via leucine-zipper domain) in a cholesterol-sensitive manner. Interacts with CAVIN1. Interacts with EHD2 in a cholesterol-dependent manner (By similarity). Forms a ternary complex with UBXN6 and VCP; mediates CAV1 targeting to lysosomes for degradation (By similarity). Interacts with ABCG1; this interaction regulates ABCG1-mediated cholesterol efflux (By similarity). Interacts with NEU3; this interaction enhances NEU3 sialidase activity within caveola. Interacts (via C-terminus) with SPRY1, SPRY2 (via C-terminus), SPRY3, and SPRY4 (By similarity). Interacts with IGFBP5; this interaction allows trafficking of IGFBP5 from the plasma membrane to the nucleus (By similarity).</text>
</comment>
<comment type="interaction">
    <interactant intactId="EBI-79998">
        <id>P33724</id>
    </interactant>
    <interactant intactId="EBI-15595051">
        <id>P59632</id>
        <label>3a</label>
    </interactant>
    <organismsDiffer>true</organismsDiffer>
    <experiments>5</experiments>
</comment>
<comment type="interaction">
    <interactant intactId="EBI-79998">
        <id>P33724</id>
    </interactant>
    <interactant intactId="EBI-491549">
        <id>P35222</id>
        <label>CTNNB1</label>
    </interactant>
    <organismsDiffer>true</organismsDiffer>
    <experiments>5</experiments>
</comment>
<comment type="subcellular location">
    <subcellularLocation>
        <location evidence="1">Golgi apparatus membrane</location>
        <topology evidence="1">Peripheral membrane protein</topology>
    </subcellularLocation>
    <subcellularLocation>
        <location evidence="1">Cell membrane</location>
        <topology evidence="1">Peripheral membrane protein</topology>
    </subcellularLocation>
    <subcellularLocation>
        <location evidence="7 10">Membrane</location>
        <location evidence="7 10">Caveola</location>
        <topology evidence="1">Peripheral membrane protein</topology>
    </subcellularLocation>
    <subcellularLocation>
        <location evidence="4">Membrane raft</location>
    </subcellularLocation>
    <subcellularLocation>
        <location evidence="10">Golgi apparatus</location>
        <location evidence="10">trans-Golgi network</location>
    </subcellularLocation>
    <text evidence="3 4">Colocalized with DPP4 in membrane rafts. Potential hairpin-like structure in the membrane. Membrane protein of caveolae.</text>
</comment>
<comment type="alternative products">
    <event type="alternative initiation"/>
    <isoform>
        <id>P33724-1</id>
        <name>Alpha</name>
        <sequence type="displayed"/>
    </isoform>
    <isoform>
        <id>P33724-2</id>
        <name>Beta</name>
        <sequence type="described" ref="VSP_018691"/>
    </isoform>
</comment>
<comment type="PTM">
    <text evidence="4">Phosphorylation of isoform Beta on serine residues is constitutive. Phosphorylated at Tyr-14 by ABL1 in response to oxidative stress (By similarity).</text>
</comment>
<comment type="PTM">
    <text evidence="4">Ubiquitinated. Undergo monoubiquitination and multi- and/or polyubiquitination. Monoubiquitination of N-terminal lysines promotes integration in a ternary complex with UBXN6 and VCP which promotes oligomeric CAV1 targeting to lysosomes for degradation. Ubiquitinated by ZNRF1; leading to degradation and modulation of the TLR4-mediated immune response.</text>
</comment>
<comment type="similarity">
    <text evidence="11">Belongs to the caveolin family.</text>
</comment>
<organism>
    <name type="scientific">Canis lupus familiaris</name>
    <name type="common">Dog</name>
    <name type="synonym">Canis familiaris</name>
    <dbReference type="NCBI Taxonomy" id="9615"/>
    <lineage>
        <taxon>Eukaryota</taxon>
        <taxon>Metazoa</taxon>
        <taxon>Chordata</taxon>
        <taxon>Craniata</taxon>
        <taxon>Vertebrata</taxon>
        <taxon>Euteleostomi</taxon>
        <taxon>Mammalia</taxon>
        <taxon>Eutheria</taxon>
        <taxon>Laurasiatheria</taxon>
        <taxon>Carnivora</taxon>
        <taxon>Caniformia</taxon>
        <taxon>Canidae</taxon>
        <taxon>Canis</taxon>
    </lineage>
</organism>
<reference key="1">
    <citation type="journal article" date="1992" name="J. Cell Biol.">
        <title>VIP21, a 21-kD membrane protein is an integral component of trans-Golgi-network-derived transport vesicles.</title>
        <authorList>
            <person name="Kurzchalia T.V."/>
            <person name="Dupree P."/>
            <person name="Parton R.G."/>
            <person name="Kellner R."/>
            <person name="Virta H."/>
            <person name="Lehnert M."/>
            <person name="Simons K."/>
        </authorList>
    </citation>
    <scope>NUCLEOTIDE SEQUENCE [GENOMIC DNA]</scope>
    <scope>PROTEIN SEQUENCE OF 48-74 AND 166-176</scope>
    <source>
        <tissue>Epithelium</tissue>
    </source>
</reference>
<reference key="2">
    <citation type="journal article" date="1993" name="J. Cell Biol.">
        <title>Signal transducing molecules and glycosyl-phosphatidylinositol-linked proteins form a caveolin-rich insoluble complex in MDCK cells.</title>
        <authorList>
            <person name="Sargiacomo M."/>
            <person name="Sudol M."/>
            <person name="Tang Z."/>
            <person name="Lisanti M.P."/>
        </authorList>
    </citation>
    <scope>NUCLEOTIDE SEQUENCE [MRNA]</scope>
    <source>
        <strain>Cocker spaniel</strain>
        <tissue>Kidney</tissue>
    </source>
</reference>
<reference key="3">
    <citation type="journal article" date="2003" name="Nature">
        <title>Comparative analyses of multi-species sequences from targeted genomic regions.</title>
        <authorList>
            <person name="Thomas J.W."/>
            <person name="Touchman J.W."/>
            <person name="Blakesley R.W."/>
            <person name="Bouffard G.G."/>
            <person name="Beckstrom-Sternberg S.M."/>
            <person name="Margulies E.H."/>
            <person name="Blanchette M."/>
            <person name="Siepel A.C."/>
            <person name="Thomas P.J."/>
            <person name="McDowell J.C."/>
            <person name="Maskeri B."/>
            <person name="Hansen N.F."/>
            <person name="Schwartz M.S."/>
            <person name="Weber R.J."/>
            <person name="Kent W.J."/>
            <person name="Karolchik D."/>
            <person name="Bruen T.C."/>
            <person name="Bevan R."/>
            <person name="Cutler D.J."/>
            <person name="Schwartz S."/>
            <person name="Elnitski L."/>
            <person name="Idol J.R."/>
            <person name="Prasad A.B."/>
            <person name="Lee-Lin S.-Q."/>
            <person name="Maduro V.V.B."/>
            <person name="Summers T.J."/>
            <person name="Portnoy M.E."/>
            <person name="Dietrich N.L."/>
            <person name="Akhter N."/>
            <person name="Ayele K."/>
            <person name="Benjamin B."/>
            <person name="Cariaga K."/>
            <person name="Brinkley C.P."/>
            <person name="Brooks S.Y."/>
            <person name="Granite S."/>
            <person name="Guan X."/>
            <person name="Gupta J."/>
            <person name="Haghighi P."/>
            <person name="Ho S.-L."/>
            <person name="Huang M.C."/>
            <person name="Karlins E."/>
            <person name="Laric P.L."/>
            <person name="Legaspi R."/>
            <person name="Lim M.J."/>
            <person name="Maduro Q.L."/>
            <person name="Masiello C.A."/>
            <person name="Mastrian S.D."/>
            <person name="McCloskey J.C."/>
            <person name="Pearson R."/>
            <person name="Stantripop S."/>
            <person name="Tiongson E.E."/>
            <person name="Tran J.T."/>
            <person name="Tsurgeon C."/>
            <person name="Vogt J.L."/>
            <person name="Walker M.A."/>
            <person name="Wetherby K.D."/>
            <person name="Wiggins L.S."/>
            <person name="Young A.C."/>
            <person name="Zhang L.-H."/>
            <person name="Osoegawa K."/>
            <person name="Zhu B."/>
            <person name="Zhao B."/>
            <person name="Shu C.L."/>
            <person name="De Jong P.J."/>
            <person name="Lawrence C.E."/>
            <person name="Smit A.F."/>
            <person name="Chakravarti A."/>
            <person name="Haussler D."/>
            <person name="Green P."/>
            <person name="Miller W."/>
            <person name="Green E.D."/>
        </authorList>
    </citation>
    <scope>NUCLEOTIDE SEQUENCE [LARGE SCALE GENOMIC DNA]</scope>
</reference>
<reference key="4">
    <citation type="journal article" date="1993" name="EMBO J.">
        <title>Caveolae and sorting in the trans-Golgi network of epithelial cells.</title>
        <authorList>
            <person name="Dupree P."/>
            <person name="Parton R.G."/>
            <person name="Raposo G."/>
            <person name="Kurzchalia T.V."/>
            <person name="Simons K."/>
        </authorList>
    </citation>
    <scope>SUBCELLULAR LOCATION</scope>
</reference>
<reference key="5">
    <citation type="journal article" date="1995" name="Proc. Natl. Acad. Sci. U.S.A.">
        <title>Oligomeric structure of caveolin: implications for caveolae membrane organization.</title>
        <authorList>
            <person name="Sargiacomo M."/>
            <person name="Scherer P.E."/>
            <person name="Tang Z."/>
            <person name="Kubler E."/>
            <person name="Song K.S."/>
            <person name="Sanders M.C."/>
            <person name="Lisanti M.P."/>
        </authorList>
    </citation>
    <scope>SUBUNIT</scope>
</reference>
<reference key="6">
    <citation type="journal article" date="1995" name="J. Biol. Chem.">
        <title>Caveolin is palmitoylated on multiple cysteine residues. Palmitoylation is not necessary for localization of caveolin to caveolae.</title>
        <authorList>
            <person name="Dietzen D.J."/>
            <person name="Hastings W.R."/>
            <person name="Lublin D.M."/>
        </authorList>
    </citation>
    <scope>PALMITOYLATION AT CYS-133; CYS-143 AND CYS-156</scope>
</reference>
<reference key="7">
    <citation type="journal article" date="1995" name="J. Biol. Chem.">
        <title>Caveolin isoforms differ in their N-terminal protein sequence and subcellular distribution. Identification and epitope mapping of an isoform-specific monoclonal antibody probe.</title>
        <authorList>
            <person name="Scherer P.E."/>
            <person name="Tang Z."/>
            <person name="Chun M."/>
            <person name="Sargiacomo M."/>
            <person name="Lodish H.F."/>
            <person name="Lisanti M.P."/>
        </authorList>
    </citation>
    <scope>ALTERNATIVE INITIATION</scope>
</reference>
<reference key="8">
    <citation type="journal article" date="2000" name="J. Biol. Chem.">
        <title>Caveolin-1 expression inhibits Wnt/beta-catenin/Lef-1 signaling by recruiting beta-catenin to caveolae membrane domains.</title>
        <authorList>
            <person name="Galbiati F."/>
            <person name="Volonte D."/>
            <person name="Brown A.M."/>
            <person name="Weinstein D.E."/>
            <person name="Ben-Ze'ev A."/>
            <person name="Pestell R.G."/>
            <person name="Lisanti M.P."/>
        </authorList>
    </citation>
    <scope>INTERACTION WITH CTNNB1; CDH1 AND JUP</scope>
    <scope>SUBCELLULAR LOCATION</scope>
</reference>
<name>CAV1_CANLF</name>
<evidence type="ECO:0000250" key="1"/>
<evidence type="ECO:0000250" key="2">
    <source>
        <dbReference type="UniProtKB" id="P41350"/>
    </source>
</evidence>
<evidence type="ECO:0000250" key="3">
    <source>
        <dbReference type="UniProtKB" id="P49817"/>
    </source>
</evidence>
<evidence type="ECO:0000250" key="4">
    <source>
        <dbReference type="UniProtKB" id="Q03135"/>
    </source>
</evidence>
<evidence type="ECO:0000250" key="5">
    <source>
        <dbReference type="UniProtKB" id="Q2IBA5"/>
    </source>
</evidence>
<evidence type="ECO:0000255" key="6"/>
<evidence type="ECO:0000269" key="7">
    <source>
    </source>
</evidence>
<evidence type="ECO:0000269" key="8">
    <source>
    </source>
</evidence>
<evidence type="ECO:0000269" key="9">
    <source>
    </source>
</evidence>
<evidence type="ECO:0000269" key="10">
    <source>
    </source>
</evidence>
<evidence type="ECO:0000305" key="11"/>